<gene>
    <name evidence="1" type="primary">zapA</name>
    <name type="ordered locus">ECIAI1_3029</name>
</gene>
<proteinExistence type="inferred from homology"/>
<feature type="chain" id="PRO_1000189512" description="Cell division protein ZapA">
    <location>
        <begin position="1"/>
        <end position="109"/>
    </location>
</feature>
<feature type="coiled-coil region" evidence="1">
    <location>
        <begin position="21"/>
        <end position="99"/>
    </location>
</feature>
<dbReference type="EMBL" id="CU928160">
    <property type="protein sequence ID" value="CAQ99844.1"/>
    <property type="molecule type" value="Genomic_DNA"/>
</dbReference>
<dbReference type="RefSeq" id="WP_001276008.1">
    <property type="nucleotide sequence ID" value="NC_011741.1"/>
</dbReference>
<dbReference type="SMR" id="B7LYH4"/>
<dbReference type="GeneID" id="93779091"/>
<dbReference type="KEGG" id="ecr:ECIAI1_3029"/>
<dbReference type="HOGENOM" id="CLU_116623_3_0_6"/>
<dbReference type="GO" id="GO:0032153">
    <property type="term" value="C:cell division site"/>
    <property type="evidence" value="ECO:0007669"/>
    <property type="project" value="TreeGrafter"/>
</dbReference>
<dbReference type="GO" id="GO:0030428">
    <property type="term" value="C:cell septum"/>
    <property type="evidence" value="ECO:0007669"/>
    <property type="project" value="TreeGrafter"/>
</dbReference>
<dbReference type="GO" id="GO:0005829">
    <property type="term" value="C:cytosol"/>
    <property type="evidence" value="ECO:0007669"/>
    <property type="project" value="TreeGrafter"/>
</dbReference>
<dbReference type="GO" id="GO:0005886">
    <property type="term" value="C:plasma membrane"/>
    <property type="evidence" value="ECO:0007669"/>
    <property type="project" value="UniProtKB-UniRule"/>
</dbReference>
<dbReference type="GO" id="GO:0000917">
    <property type="term" value="P:division septum assembly"/>
    <property type="evidence" value="ECO:0007669"/>
    <property type="project" value="UniProtKB-KW"/>
</dbReference>
<dbReference type="GO" id="GO:0043093">
    <property type="term" value="P:FtsZ-dependent cytokinesis"/>
    <property type="evidence" value="ECO:0007669"/>
    <property type="project" value="TreeGrafter"/>
</dbReference>
<dbReference type="GO" id="GO:0000921">
    <property type="term" value="P:septin ring assembly"/>
    <property type="evidence" value="ECO:0007669"/>
    <property type="project" value="TreeGrafter"/>
</dbReference>
<dbReference type="FunFam" id="1.20.5.50:FF:000001">
    <property type="entry name" value="Cell division protein ZapA"/>
    <property type="match status" value="1"/>
</dbReference>
<dbReference type="FunFam" id="3.30.160.880:FF:000001">
    <property type="entry name" value="Cell division protein ZapA"/>
    <property type="match status" value="1"/>
</dbReference>
<dbReference type="Gene3D" id="1.20.5.50">
    <property type="match status" value="1"/>
</dbReference>
<dbReference type="Gene3D" id="3.30.160.880">
    <property type="entry name" value="Cell division protein ZapA protomer, N-terminal domain"/>
    <property type="match status" value="1"/>
</dbReference>
<dbReference type="HAMAP" id="MF_02012">
    <property type="entry name" value="ZapA_type1"/>
    <property type="match status" value="1"/>
</dbReference>
<dbReference type="InterPro" id="IPR007838">
    <property type="entry name" value="Cell_div_ZapA-like"/>
</dbReference>
<dbReference type="InterPro" id="IPR036192">
    <property type="entry name" value="Cell_div_ZapA-like_sf"/>
</dbReference>
<dbReference type="InterPro" id="IPR023771">
    <property type="entry name" value="Cell_div_ZapA_eubact"/>
</dbReference>
<dbReference type="InterPro" id="IPR042233">
    <property type="entry name" value="Cell_div_ZapA_N"/>
</dbReference>
<dbReference type="NCBIfam" id="NF008209">
    <property type="entry name" value="PRK10972.1"/>
    <property type="match status" value="1"/>
</dbReference>
<dbReference type="PANTHER" id="PTHR34981">
    <property type="entry name" value="CELL DIVISION PROTEIN ZAPA"/>
    <property type="match status" value="1"/>
</dbReference>
<dbReference type="PANTHER" id="PTHR34981:SF1">
    <property type="entry name" value="CELL DIVISION PROTEIN ZAPA"/>
    <property type="match status" value="1"/>
</dbReference>
<dbReference type="Pfam" id="PF05164">
    <property type="entry name" value="ZapA"/>
    <property type="match status" value="1"/>
</dbReference>
<dbReference type="SUPFAM" id="SSF102829">
    <property type="entry name" value="Cell division protein ZapA-like"/>
    <property type="match status" value="1"/>
</dbReference>
<comment type="function">
    <text evidence="1">Activator of cell division through the inhibition of FtsZ GTPase activity, therefore promoting FtsZ assembly into bundles of protofilaments necessary for the formation of the division Z ring. It is recruited early at mid-cell but it is not essential for cell division.</text>
</comment>
<comment type="subunit">
    <text evidence="1">Homodimer. Interacts with FtsZ.</text>
</comment>
<comment type="subcellular location">
    <subcellularLocation>
        <location evidence="1">Cytoplasm</location>
    </subcellularLocation>
    <text evidence="1">Localizes at mid-cell.</text>
</comment>
<comment type="similarity">
    <text evidence="1">Belongs to the ZapA family. Type 1 subfamily.</text>
</comment>
<organism>
    <name type="scientific">Escherichia coli O8 (strain IAI1)</name>
    <dbReference type="NCBI Taxonomy" id="585034"/>
    <lineage>
        <taxon>Bacteria</taxon>
        <taxon>Pseudomonadati</taxon>
        <taxon>Pseudomonadota</taxon>
        <taxon>Gammaproteobacteria</taxon>
        <taxon>Enterobacterales</taxon>
        <taxon>Enterobacteriaceae</taxon>
        <taxon>Escherichia</taxon>
    </lineage>
</organism>
<protein>
    <recommendedName>
        <fullName evidence="1">Cell division protein ZapA</fullName>
    </recommendedName>
    <alternativeName>
        <fullName evidence="1">Z ring-associated protein ZapA</fullName>
    </alternativeName>
</protein>
<name>ZAPA_ECO8A</name>
<accession>B7LYH4</accession>
<reference key="1">
    <citation type="journal article" date="2009" name="PLoS Genet.">
        <title>Organised genome dynamics in the Escherichia coli species results in highly diverse adaptive paths.</title>
        <authorList>
            <person name="Touchon M."/>
            <person name="Hoede C."/>
            <person name="Tenaillon O."/>
            <person name="Barbe V."/>
            <person name="Baeriswyl S."/>
            <person name="Bidet P."/>
            <person name="Bingen E."/>
            <person name="Bonacorsi S."/>
            <person name="Bouchier C."/>
            <person name="Bouvet O."/>
            <person name="Calteau A."/>
            <person name="Chiapello H."/>
            <person name="Clermont O."/>
            <person name="Cruveiller S."/>
            <person name="Danchin A."/>
            <person name="Diard M."/>
            <person name="Dossat C."/>
            <person name="Karoui M.E."/>
            <person name="Frapy E."/>
            <person name="Garry L."/>
            <person name="Ghigo J.M."/>
            <person name="Gilles A.M."/>
            <person name="Johnson J."/>
            <person name="Le Bouguenec C."/>
            <person name="Lescat M."/>
            <person name="Mangenot S."/>
            <person name="Martinez-Jehanne V."/>
            <person name="Matic I."/>
            <person name="Nassif X."/>
            <person name="Oztas S."/>
            <person name="Petit M.A."/>
            <person name="Pichon C."/>
            <person name="Rouy Z."/>
            <person name="Ruf C.S."/>
            <person name="Schneider D."/>
            <person name="Tourret J."/>
            <person name="Vacherie B."/>
            <person name="Vallenet D."/>
            <person name="Medigue C."/>
            <person name="Rocha E.P.C."/>
            <person name="Denamur E."/>
        </authorList>
    </citation>
    <scope>NUCLEOTIDE SEQUENCE [LARGE SCALE GENOMIC DNA]</scope>
    <source>
        <strain>IAI1</strain>
    </source>
</reference>
<evidence type="ECO:0000255" key="1">
    <source>
        <dbReference type="HAMAP-Rule" id="MF_02012"/>
    </source>
</evidence>
<keyword id="KW-0131">Cell cycle</keyword>
<keyword id="KW-0132">Cell division</keyword>
<keyword id="KW-0175">Coiled coil</keyword>
<keyword id="KW-0963">Cytoplasm</keyword>
<keyword id="KW-0717">Septation</keyword>
<sequence>MSAQPVDIQIFGRSLRVNCPPDQRDALNQAADDLNQRLQDLKERTRVTNTEQLVFIAALNISYELAQEKAKTRDYAASMEQRIRMLQQTIEQALLEQGRITEKTNQNFE</sequence>